<dbReference type="EMBL" id="CP001399">
    <property type="protein sequence ID" value="ACP35889.1"/>
    <property type="molecule type" value="Genomic_DNA"/>
</dbReference>
<dbReference type="RefSeq" id="WP_009990648.1">
    <property type="nucleotide sequence ID" value="NC_012589.1"/>
</dbReference>
<dbReference type="SMR" id="C3MR76"/>
<dbReference type="KEGG" id="sis:LS215_1893"/>
<dbReference type="HOGENOM" id="CLU_181948_4_0_2"/>
<dbReference type="OrthoDB" id="65887at2157"/>
<dbReference type="Proteomes" id="UP000001747">
    <property type="component" value="Chromosome"/>
</dbReference>
<dbReference type="GO" id="GO:0022625">
    <property type="term" value="C:cytosolic large ribosomal subunit"/>
    <property type="evidence" value="ECO:0007669"/>
    <property type="project" value="TreeGrafter"/>
</dbReference>
<dbReference type="GO" id="GO:0003735">
    <property type="term" value="F:structural constituent of ribosome"/>
    <property type="evidence" value="ECO:0007669"/>
    <property type="project" value="InterPro"/>
</dbReference>
<dbReference type="GO" id="GO:0006412">
    <property type="term" value="P:translation"/>
    <property type="evidence" value="ECO:0007669"/>
    <property type="project" value="UniProtKB-UniRule"/>
</dbReference>
<dbReference type="FunFam" id="1.10.1620.10:FF:000001">
    <property type="entry name" value="60S ribosomal protein-like L39"/>
    <property type="match status" value="1"/>
</dbReference>
<dbReference type="Gene3D" id="1.10.1620.10">
    <property type="entry name" value="Ribosomal protein L39e"/>
    <property type="match status" value="1"/>
</dbReference>
<dbReference type="HAMAP" id="MF_00629">
    <property type="entry name" value="Ribosomal_eL39"/>
    <property type="match status" value="1"/>
</dbReference>
<dbReference type="InterPro" id="IPR000077">
    <property type="entry name" value="Ribosomal_eL39"/>
</dbReference>
<dbReference type="InterPro" id="IPR020083">
    <property type="entry name" value="Ribosomal_eL39_CS"/>
</dbReference>
<dbReference type="InterPro" id="IPR023626">
    <property type="entry name" value="Ribosomal_eL39_dom_sf"/>
</dbReference>
<dbReference type="NCBIfam" id="NF002316">
    <property type="entry name" value="PRK01242.1"/>
    <property type="match status" value="1"/>
</dbReference>
<dbReference type="PANTHER" id="PTHR19970:SF0">
    <property type="entry name" value="LARGE RIBOSOMAL SUBUNIT PROTEIN EL39"/>
    <property type="match status" value="1"/>
</dbReference>
<dbReference type="PANTHER" id="PTHR19970">
    <property type="entry name" value="RIBOSOMAL PROTEIN L39E"/>
    <property type="match status" value="1"/>
</dbReference>
<dbReference type="Pfam" id="PF00832">
    <property type="entry name" value="Ribosomal_L39"/>
    <property type="match status" value="1"/>
</dbReference>
<dbReference type="SUPFAM" id="SSF48662">
    <property type="entry name" value="Ribosomal protein L39e"/>
    <property type="match status" value="1"/>
</dbReference>
<dbReference type="PROSITE" id="PS00051">
    <property type="entry name" value="RIBOSOMAL_L39E"/>
    <property type="match status" value="1"/>
</dbReference>
<keyword id="KW-0687">Ribonucleoprotein</keyword>
<keyword id="KW-0689">Ribosomal protein</keyword>
<protein>
    <recommendedName>
        <fullName evidence="1">Large ribosomal subunit protein eL39</fullName>
    </recommendedName>
    <alternativeName>
        <fullName evidence="2">50S ribosomal protein L39e</fullName>
    </alternativeName>
</protein>
<feature type="chain" id="PRO_1000212323" description="Large ribosomal subunit protein eL39">
    <location>
        <begin position="1"/>
        <end position="51"/>
    </location>
</feature>
<proteinExistence type="inferred from homology"/>
<comment type="similarity">
    <text evidence="1">Belongs to the eukaryotic ribosomal protein eL39 family.</text>
</comment>
<reference key="1">
    <citation type="journal article" date="2009" name="Proc. Natl. Acad. Sci. U.S.A.">
        <title>Biogeography of the Sulfolobus islandicus pan-genome.</title>
        <authorList>
            <person name="Reno M.L."/>
            <person name="Held N.L."/>
            <person name="Fields C.J."/>
            <person name="Burke P.V."/>
            <person name="Whitaker R.J."/>
        </authorList>
    </citation>
    <scope>NUCLEOTIDE SEQUENCE [LARGE SCALE GENOMIC DNA]</scope>
    <source>
        <strain>L.S.2.15 / Lassen #1</strain>
    </source>
</reference>
<name>RL39_SACI2</name>
<organism>
    <name type="scientific">Saccharolobus islandicus (strain L.S.2.15 / Lassen #1)</name>
    <name type="common">Sulfolobus islandicus</name>
    <dbReference type="NCBI Taxonomy" id="429572"/>
    <lineage>
        <taxon>Archaea</taxon>
        <taxon>Thermoproteota</taxon>
        <taxon>Thermoprotei</taxon>
        <taxon>Sulfolobales</taxon>
        <taxon>Sulfolobaceae</taxon>
        <taxon>Saccharolobus</taxon>
    </lineage>
</organism>
<sequence length="51" mass="6127">MSRNKPVAKKFRLAKALKANSPIPIWIVLKTRGRVRYNPLRRNWRRNDLKV</sequence>
<evidence type="ECO:0000255" key="1">
    <source>
        <dbReference type="HAMAP-Rule" id="MF_00629"/>
    </source>
</evidence>
<evidence type="ECO:0000305" key="2"/>
<gene>
    <name evidence="1" type="primary">rpl39e</name>
    <name type="ordered locus">LS215_1893</name>
</gene>
<accession>C3MR76</accession>